<comment type="function">
    <text evidence="1">Catalyzes the ATP- as well as the pyrophosphate-dependent phosphorylation of a specific serine residue in HPr, a phosphocarrier protein of the phosphoenolpyruvate-dependent sugar phosphotransferase system (PTS). HprK/P also catalyzes the pyrophosphate-producing, inorganic phosphate-dependent dephosphorylation (phosphorolysis) of seryl-phosphorylated HPr (P-Ser-HPr).</text>
</comment>
<comment type="catalytic activity">
    <reaction evidence="1">
        <text>[HPr protein]-L-serine + ATP = [HPr protein]-O-phospho-L-serine + ADP + H(+)</text>
        <dbReference type="Rhea" id="RHEA:46600"/>
        <dbReference type="Rhea" id="RHEA-COMP:11602"/>
        <dbReference type="Rhea" id="RHEA-COMP:11603"/>
        <dbReference type="ChEBI" id="CHEBI:15378"/>
        <dbReference type="ChEBI" id="CHEBI:29999"/>
        <dbReference type="ChEBI" id="CHEBI:30616"/>
        <dbReference type="ChEBI" id="CHEBI:83421"/>
        <dbReference type="ChEBI" id="CHEBI:456216"/>
    </reaction>
</comment>
<comment type="catalytic activity">
    <reaction evidence="1">
        <text>[HPr protein]-O-phospho-L-serine + phosphate + H(+) = [HPr protein]-L-serine + diphosphate</text>
        <dbReference type="Rhea" id="RHEA:46604"/>
        <dbReference type="Rhea" id="RHEA-COMP:11602"/>
        <dbReference type="Rhea" id="RHEA-COMP:11603"/>
        <dbReference type="ChEBI" id="CHEBI:15378"/>
        <dbReference type="ChEBI" id="CHEBI:29999"/>
        <dbReference type="ChEBI" id="CHEBI:33019"/>
        <dbReference type="ChEBI" id="CHEBI:43474"/>
        <dbReference type="ChEBI" id="CHEBI:83421"/>
    </reaction>
</comment>
<comment type="cofactor">
    <cofactor evidence="1">
        <name>Mg(2+)</name>
        <dbReference type="ChEBI" id="CHEBI:18420"/>
    </cofactor>
</comment>
<comment type="subunit">
    <text evidence="1">Homohexamer.</text>
</comment>
<comment type="domain">
    <text evidence="1">The Walker A ATP-binding motif also binds Pi and PPi.</text>
</comment>
<comment type="miscellaneous">
    <text evidence="1">Both phosphorylation and phosphorolysis are carried out by the same active site and suggest a common mechanism for both reactions.</text>
</comment>
<comment type="similarity">
    <text evidence="1">Belongs to the HPrK/P family.</text>
</comment>
<name>HPRK_AZOSB</name>
<accession>A1K2R3</accession>
<sequence length="313" mass="34335">MRQTSVARLYEDQGPRLQLTHVSGPLDAVLSVAEERMWPADLVGHLNLIHPTRLQVLGAAELEWARRQSREKVAHHLNGILSARPPAIIVADGCETPNIVHGVCTAHNVALFSTPHPSASVIDQLRLYLSRQLAEKISLHGVFMDVLGIGVFITGNSGAGKSELALELISRGHGLVADDIVEFSRTAPTVLEGRCPELLKDFIEVRGLGILNIRTIFGETACRRKMRLRLVCHLERRQPGQDDPNRLPVQQEQQVILGVSTPRVTLPVAAGRNLAVLLEAAVRSTILQLRGVDSTQEFIDRQSRMLMGDGDGL</sequence>
<reference key="1">
    <citation type="journal article" date="2006" name="Nat. Biotechnol.">
        <title>Complete genome of the mutualistic, N2-fixing grass endophyte Azoarcus sp. strain BH72.</title>
        <authorList>
            <person name="Krause A."/>
            <person name="Ramakumar A."/>
            <person name="Bartels D."/>
            <person name="Battistoni F."/>
            <person name="Bekel T."/>
            <person name="Boch J."/>
            <person name="Boehm M."/>
            <person name="Friedrich F."/>
            <person name="Hurek T."/>
            <person name="Krause L."/>
            <person name="Linke B."/>
            <person name="McHardy A.C."/>
            <person name="Sarkar A."/>
            <person name="Schneiker S."/>
            <person name="Syed A.A."/>
            <person name="Thauer R."/>
            <person name="Vorhoelter F.-J."/>
            <person name="Weidner S."/>
            <person name="Puehler A."/>
            <person name="Reinhold-Hurek B."/>
            <person name="Kaiser O."/>
            <person name="Goesmann A."/>
        </authorList>
    </citation>
    <scope>NUCLEOTIDE SEQUENCE [LARGE SCALE GENOMIC DNA]</scope>
    <source>
        <strain>BH72</strain>
    </source>
</reference>
<protein>
    <recommendedName>
        <fullName evidence="1">HPr kinase/phosphorylase</fullName>
        <shortName evidence="1">HPrK/P</shortName>
        <ecNumber evidence="1">2.7.11.-</ecNumber>
        <ecNumber evidence="1">2.7.4.-</ecNumber>
    </recommendedName>
    <alternativeName>
        <fullName evidence="1">HPr(Ser) kinase/phosphorylase</fullName>
    </alternativeName>
</protein>
<dbReference type="EC" id="2.7.11.-" evidence="1"/>
<dbReference type="EC" id="2.7.4.-" evidence="1"/>
<dbReference type="EMBL" id="AM406670">
    <property type="protein sequence ID" value="CAL93118.1"/>
    <property type="molecule type" value="Genomic_DNA"/>
</dbReference>
<dbReference type="RefSeq" id="WP_011764236.1">
    <property type="nucleotide sequence ID" value="NC_008702.1"/>
</dbReference>
<dbReference type="SMR" id="A1K2R3"/>
<dbReference type="STRING" id="62928.azo0501"/>
<dbReference type="KEGG" id="aoa:dqs_0511"/>
<dbReference type="KEGG" id="azo:azo0501"/>
<dbReference type="eggNOG" id="COG1493">
    <property type="taxonomic scope" value="Bacteria"/>
</dbReference>
<dbReference type="HOGENOM" id="CLU_052030_0_2_4"/>
<dbReference type="OrthoDB" id="9778803at2"/>
<dbReference type="Proteomes" id="UP000002588">
    <property type="component" value="Chromosome"/>
</dbReference>
<dbReference type="GO" id="GO:0005524">
    <property type="term" value="F:ATP binding"/>
    <property type="evidence" value="ECO:0007669"/>
    <property type="project" value="UniProtKB-UniRule"/>
</dbReference>
<dbReference type="GO" id="GO:0000287">
    <property type="term" value="F:magnesium ion binding"/>
    <property type="evidence" value="ECO:0007669"/>
    <property type="project" value="UniProtKB-UniRule"/>
</dbReference>
<dbReference type="GO" id="GO:0000155">
    <property type="term" value="F:phosphorelay sensor kinase activity"/>
    <property type="evidence" value="ECO:0007669"/>
    <property type="project" value="InterPro"/>
</dbReference>
<dbReference type="GO" id="GO:0004674">
    <property type="term" value="F:protein serine/threonine kinase activity"/>
    <property type="evidence" value="ECO:0007669"/>
    <property type="project" value="UniProtKB-KW"/>
</dbReference>
<dbReference type="GO" id="GO:0004712">
    <property type="term" value="F:protein serine/threonine/tyrosine kinase activity"/>
    <property type="evidence" value="ECO:0007669"/>
    <property type="project" value="UniProtKB-UniRule"/>
</dbReference>
<dbReference type="GO" id="GO:0006109">
    <property type="term" value="P:regulation of carbohydrate metabolic process"/>
    <property type="evidence" value="ECO:0007669"/>
    <property type="project" value="UniProtKB-UniRule"/>
</dbReference>
<dbReference type="CDD" id="cd01918">
    <property type="entry name" value="HprK_C"/>
    <property type="match status" value="1"/>
</dbReference>
<dbReference type="FunFam" id="3.40.50.300:FF:000174">
    <property type="entry name" value="HPr kinase/phosphorylase"/>
    <property type="match status" value="1"/>
</dbReference>
<dbReference type="Gene3D" id="3.40.1390.20">
    <property type="entry name" value="HprK N-terminal domain-like"/>
    <property type="match status" value="1"/>
</dbReference>
<dbReference type="Gene3D" id="3.40.50.300">
    <property type="entry name" value="P-loop containing nucleotide triphosphate hydrolases"/>
    <property type="match status" value="1"/>
</dbReference>
<dbReference type="HAMAP" id="MF_01249">
    <property type="entry name" value="HPr_kinase"/>
    <property type="match status" value="1"/>
</dbReference>
<dbReference type="InterPro" id="IPR003755">
    <property type="entry name" value="HPr(Ser)_kin/Pase"/>
</dbReference>
<dbReference type="InterPro" id="IPR011104">
    <property type="entry name" value="Hpr_kin/Pase_C"/>
</dbReference>
<dbReference type="InterPro" id="IPR011126">
    <property type="entry name" value="Hpr_kin/Pase_Hpr_N"/>
</dbReference>
<dbReference type="InterPro" id="IPR027417">
    <property type="entry name" value="P-loop_NTPase"/>
</dbReference>
<dbReference type="InterPro" id="IPR028979">
    <property type="entry name" value="Ser_kin/Pase_Hpr-like_N_sf"/>
</dbReference>
<dbReference type="NCBIfam" id="TIGR00679">
    <property type="entry name" value="hpr-ser"/>
    <property type="match status" value="1"/>
</dbReference>
<dbReference type="PANTHER" id="PTHR30305:SF1">
    <property type="entry name" value="HPR KINASE_PHOSPHORYLASE"/>
    <property type="match status" value="1"/>
</dbReference>
<dbReference type="PANTHER" id="PTHR30305">
    <property type="entry name" value="PROTEIN YJDM-RELATED"/>
    <property type="match status" value="1"/>
</dbReference>
<dbReference type="Pfam" id="PF07475">
    <property type="entry name" value="Hpr_kinase_C"/>
    <property type="match status" value="1"/>
</dbReference>
<dbReference type="Pfam" id="PF02603">
    <property type="entry name" value="Hpr_kinase_N"/>
    <property type="match status" value="1"/>
</dbReference>
<dbReference type="SUPFAM" id="SSF75138">
    <property type="entry name" value="HprK N-terminal domain-like"/>
    <property type="match status" value="1"/>
</dbReference>
<dbReference type="SUPFAM" id="SSF53795">
    <property type="entry name" value="PEP carboxykinase-like"/>
    <property type="match status" value="1"/>
</dbReference>
<evidence type="ECO:0000255" key="1">
    <source>
        <dbReference type="HAMAP-Rule" id="MF_01249"/>
    </source>
</evidence>
<gene>
    <name evidence="1" type="primary">hprK</name>
    <name type="ordered locus">azo0501</name>
</gene>
<proteinExistence type="inferred from homology"/>
<organism>
    <name type="scientific">Azoarcus sp. (strain BH72)</name>
    <dbReference type="NCBI Taxonomy" id="418699"/>
    <lineage>
        <taxon>Bacteria</taxon>
        <taxon>Pseudomonadati</taxon>
        <taxon>Pseudomonadota</taxon>
        <taxon>Betaproteobacteria</taxon>
        <taxon>Rhodocyclales</taxon>
        <taxon>Zoogloeaceae</taxon>
        <taxon>Azoarcus</taxon>
    </lineage>
</organism>
<keyword id="KW-0067">ATP-binding</keyword>
<keyword id="KW-0418">Kinase</keyword>
<keyword id="KW-0460">Magnesium</keyword>
<keyword id="KW-0479">Metal-binding</keyword>
<keyword id="KW-0511">Multifunctional enzyme</keyword>
<keyword id="KW-0547">Nucleotide-binding</keyword>
<keyword id="KW-1185">Reference proteome</keyword>
<keyword id="KW-0723">Serine/threonine-protein kinase</keyword>
<keyword id="KW-0808">Transferase</keyword>
<feature type="chain" id="PRO_1000067118" description="HPr kinase/phosphorylase">
    <location>
        <begin position="1"/>
        <end position="313"/>
    </location>
</feature>
<feature type="region of interest" description="Important for the catalytic mechanism of both phosphorylation and dephosphorylation" evidence="1">
    <location>
        <begin position="203"/>
        <end position="212"/>
    </location>
</feature>
<feature type="region of interest" description="Important for the catalytic mechanism of dephosphorylation" evidence="1">
    <location>
        <begin position="267"/>
        <end position="272"/>
    </location>
</feature>
<feature type="active site" evidence="1">
    <location>
        <position position="140"/>
    </location>
</feature>
<feature type="active site" evidence="1">
    <location>
        <position position="161"/>
    </location>
</feature>
<feature type="active site" description="Proton acceptor; for phosphorylation activity. Proton donor; for dephosphorylation activity" evidence="1">
    <location>
        <position position="179"/>
    </location>
</feature>
<feature type="active site" evidence="1">
    <location>
        <position position="246"/>
    </location>
</feature>
<feature type="binding site" evidence="1">
    <location>
        <begin position="155"/>
        <end position="162"/>
    </location>
    <ligand>
        <name>ATP</name>
        <dbReference type="ChEBI" id="CHEBI:30616"/>
    </ligand>
</feature>
<feature type="binding site" evidence="1">
    <location>
        <position position="162"/>
    </location>
    <ligand>
        <name>Mg(2+)</name>
        <dbReference type="ChEBI" id="CHEBI:18420"/>
    </ligand>
</feature>
<feature type="binding site" evidence="1">
    <location>
        <position position="204"/>
    </location>
    <ligand>
        <name>Mg(2+)</name>
        <dbReference type="ChEBI" id="CHEBI:18420"/>
    </ligand>
</feature>